<comment type="function">
    <text evidence="1">Catalyzes the hydrolysis of N(2)-succinylarginine into N(2)-succinylornithine, ammonia and CO(2).</text>
</comment>
<comment type="catalytic activity">
    <reaction evidence="1">
        <text>N(2)-succinyl-L-arginine + 2 H2O + 2 H(+) = N(2)-succinyl-L-ornithine + 2 NH4(+) + CO2</text>
        <dbReference type="Rhea" id="RHEA:19533"/>
        <dbReference type="ChEBI" id="CHEBI:15377"/>
        <dbReference type="ChEBI" id="CHEBI:15378"/>
        <dbReference type="ChEBI" id="CHEBI:16526"/>
        <dbReference type="ChEBI" id="CHEBI:28938"/>
        <dbReference type="ChEBI" id="CHEBI:58241"/>
        <dbReference type="ChEBI" id="CHEBI:58514"/>
        <dbReference type="EC" id="3.5.3.23"/>
    </reaction>
</comment>
<comment type="pathway">
    <text evidence="1">Amino-acid degradation; L-arginine degradation via AST pathway; L-glutamate and succinate from L-arginine: step 2/5.</text>
</comment>
<comment type="subunit">
    <text evidence="1">Homodimer.</text>
</comment>
<comment type="similarity">
    <text evidence="1">Belongs to the succinylarginine dihydrolase family.</text>
</comment>
<evidence type="ECO:0000255" key="1">
    <source>
        <dbReference type="HAMAP-Rule" id="MF_01172"/>
    </source>
</evidence>
<keyword id="KW-0056">Arginine metabolism</keyword>
<keyword id="KW-0378">Hydrolase</keyword>
<keyword id="KW-1185">Reference proteome</keyword>
<organism>
    <name type="scientific">Escherichia coli O45:K1 (strain S88 / ExPEC)</name>
    <dbReference type="NCBI Taxonomy" id="585035"/>
    <lineage>
        <taxon>Bacteria</taxon>
        <taxon>Pseudomonadati</taxon>
        <taxon>Pseudomonadota</taxon>
        <taxon>Gammaproteobacteria</taxon>
        <taxon>Enterobacterales</taxon>
        <taxon>Enterobacteriaceae</taxon>
        <taxon>Escherichia</taxon>
    </lineage>
</organism>
<protein>
    <recommendedName>
        <fullName evidence="1">N-succinylarginine dihydrolase</fullName>
        <ecNumber evidence="1">3.5.3.23</ecNumber>
    </recommendedName>
</protein>
<feature type="chain" id="PRO_1000138009" description="N-succinylarginine dihydrolase">
    <location>
        <begin position="1"/>
        <end position="447"/>
    </location>
</feature>
<feature type="active site" evidence="1">
    <location>
        <position position="174"/>
    </location>
</feature>
<feature type="active site" evidence="1">
    <location>
        <position position="248"/>
    </location>
</feature>
<feature type="active site" description="Nucleophile" evidence="1">
    <location>
        <position position="365"/>
    </location>
</feature>
<feature type="binding site" evidence="1">
    <location>
        <begin position="19"/>
        <end position="28"/>
    </location>
    <ligand>
        <name>substrate</name>
    </ligand>
</feature>
<feature type="binding site" evidence="1">
    <location>
        <position position="110"/>
    </location>
    <ligand>
        <name>substrate</name>
    </ligand>
</feature>
<feature type="binding site" evidence="1">
    <location>
        <begin position="137"/>
        <end position="138"/>
    </location>
    <ligand>
        <name>substrate</name>
    </ligand>
</feature>
<feature type="binding site" evidence="1">
    <location>
        <position position="212"/>
    </location>
    <ligand>
        <name>substrate</name>
    </ligand>
</feature>
<feature type="binding site" evidence="1">
    <location>
        <position position="250"/>
    </location>
    <ligand>
        <name>substrate</name>
    </ligand>
</feature>
<feature type="binding site" evidence="1">
    <location>
        <position position="359"/>
    </location>
    <ligand>
        <name>substrate</name>
    </ligand>
</feature>
<gene>
    <name evidence="1" type="primary">astB</name>
    <name type="ordered locus">ECS88_1797</name>
</gene>
<sequence length="447" mass="49539">MNAWEVNFDGLVGLTHHYAGLSFGNEASTRHRFQVSNPRLAAKQGLLKMKKLADAGFPQAVIPPHERPFIPVLRQLGFRGSDEQVLEKVARQAPHWLSSVSSASPMWVANAATIAPSADTLDGKVHLTVANLNNKFHRSLEAPVTESLLKAIFNDEEKFSVHSALPQVALLGDEGAANHNRLGGHYGEPGMQLFVYGREEGNDTRPSRYPARQTREASEAVARLNQVNPQQVIFAQQNPDVIDQGVFHNDVIAVSNRQVLFCHQQAFARQSQLLANLRARVNGFMAIEVPATQVFVSDAVSTYLFNSQLLSRDDGSMVLVLPQECREHAGVWRYLNELLAADNPISELKVFDLRESMANGGGPACLRLRVVLTEEERRAVNPAVMMNDTLFNALNDWVDRYYRDRLTAADLADPQLLREGREALDTLTQLLDLGSVYPFQREGGGNG</sequence>
<reference key="1">
    <citation type="journal article" date="2009" name="PLoS Genet.">
        <title>Organised genome dynamics in the Escherichia coli species results in highly diverse adaptive paths.</title>
        <authorList>
            <person name="Touchon M."/>
            <person name="Hoede C."/>
            <person name="Tenaillon O."/>
            <person name="Barbe V."/>
            <person name="Baeriswyl S."/>
            <person name="Bidet P."/>
            <person name="Bingen E."/>
            <person name="Bonacorsi S."/>
            <person name="Bouchier C."/>
            <person name="Bouvet O."/>
            <person name="Calteau A."/>
            <person name="Chiapello H."/>
            <person name="Clermont O."/>
            <person name="Cruveiller S."/>
            <person name="Danchin A."/>
            <person name="Diard M."/>
            <person name="Dossat C."/>
            <person name="Karoui M.E."/>
            <person name="Frapy E."/>
            <person name="Garry L."/>
            <person name="Ghigo J.M."/>
            <person name="Gilles A.M."/>
            <person name="Johnson J."/>
            <person name="Le Bouguenec C."/>
            <person name="Lescat M."/>
            <person name="Mangenot S."/>
            <person name="Martinez-Jehanne V."/>
            <person name="Matic I."/>
            <person name="Nassif X."/>
            <person name="Oztas S."/>
            <person name="Petit M.A."/>
            <person name="Pichon C."/>
            <person name="Rouy Z."/>
            <person name="Ruf C.S."/>
            <person name="Schneider D."/>
            <person name="Tourret J."/>
            <person name="Vacherie B."/>
            <person name="Vallenet D."/>
            <person name="Medigue C."/>
            <person name="Rocha E.P.C."/>
            <person name="Denamur E."/>
        </authorList>
    </citation>
    <scope>NUCLEOTIDE SEQUENCE [LARGE SCALE GENOMIC DNA]</scope>
    <source>
        <strain>S88 / ExPEC</strain>
    </source>
</reference>
<name>ASTB_ECO45</name>
<proteinExistence type="inferred from homology"/>
<accession>B7MAV6</accession>
<dbReference type="EC" id="3.5.3.23" evidence="1"/>
<dbReference type="EMBL" id="CU928161">
    <property type="protein sequence ID" value="CAR03105.1"/>
    <property type="molecule type" value="Genomic_DNA"/>
</dbReference>
<dbReference type="RefSeq" id="WP_000994978.1">
    <property type="nucleotide sequence ID" value="NC_011742.1"/>
</dbReference>
<dbReference type="SMR" id="B7MAV6"/>
<dbReference type="KEGG" id="ecz:ECS88_1797"/>
<dbReference type="HOGENOM" id="CLU_053835_0_0_6"/>
<dbReference type="UniPathway" id="UPA00185">
    <property type="reaction ID" value="UER00280"/>
</dbReference>
<dbReference type="Proteomes" id="UP000000747">
    <property type="component" value="Chromosome"/>
</dbReference>
<dbReference type="GO" id="GO:0009015">
    <property type="term" value="F:N-succinylarginine dihydrolase activity"/>
    <property type="evidence" value="ECO:0007669"/>
    <property type="project" value="UniProtKB-UniRule"/>
</dbReference>
<dbReference type="GO" id="GO:0019544">
    <property type="term" value="P:arginine catabolic process to glutamate"/>
    <property type="evidence" value="ECO:0007669"/>
    <property type="project" value="UniProtKB-UniRule"/>
</dbReference>
<dbReference type="GO" id="GO:0019545">
    <property type="term" value="P:arginine catabolic process to succinate"/>
    <property type="evidence" value="ECO:0007669"/>
    <property type="project" value="UniProtKB-UniRule"/>
</dbReference>
<dbReference type="FunFam" id="3.75.10.20:FF:000001">
    <property type="entry name" value="N-succinylarginine dihydrolase"/>
    <property type="match status" value="1"/>
</dbReference>
<dbReference type="Gene3D" id="3.75.10.20">
    <property type="entry name" value="Succinylarginine dihydrolase"/>
    <property type="match status" value="1"/>
</dbReference>
<dbReference type="HAMAP" id="MF_01172">
    <property type="entry name" value="AstB"/>
    <property type="match status" value="1"/>
</dbReference>
<dbReference type="InterPro" id="IPR037031">
    <property type="entry name" value="AstB_sf"/>
</dbReference>
<dbReference type="InterPro" id="IPR007079">
    <property type="entry name" value="SuccinylArg_d-Hdrlase_AstB"/>
</dbReference>
<dbReference type="NCBIfam" id="TIGR03241">
    <property type="entry name" value="arg_catab_astB"/>
    <property type="match status" value="1"/>
</dbReference>
<dbReference type="NCBIfam" id="NF009789">
    <property type="entry name" value="PRK13281.1"/>
    <property type="match status" value="1"/>
</dbReference>
<dbReference type="PANTHER" id="PTHR30420">
    <property type="entry name" value="N-SUCCINYLARGININE DIHYDROLASE"/>
    <property type="match status" value="1"/>
</dbReference>
<dbReference type="PANTHER" id="PTHR30420:SF2">
    <property type="entry name" value="N-SUCCINYLARGININE DIHYDROLASE"/>
    <property type="match status" value="1"/>
</dbReference>
<dbReference type="Pfam" id="PF04996">
    <property type="entry name" value="AstB"/>
    <property type="match status" value="1"/>
</dbReference>
<dbReference type="SUPFAM" id="SSF55909">
    <property type="entry name" value="Pentein"/>
    <property type="match status" value="1"/>
</dbReference>